<sequence>MLWVDKYRPKSLDKVIVHEDIAQKLKKLVSEQDCPHLLFYGPSGSGKKTLIMALLKQIYGASAEKVKVENRAWKVDAGSRTIDLELTTLSSTNHVELTPSDAGFQDRYIVQEIIKEMAKNRPIDTKGKKGYKVLVLNEVDKLSREAQHSLRRTMEKYSSSCRLILCCNSSSKVTEAIKSRCLNVRINAPSQEEIVKVLEFVAKKESLQLPQGFAARIAEKSNRSLRRAILSLETCRVQNYPFTGNQVISPMDWEEYVAEIATDMMKEQSPKKLFQVRGKVYELLVNCIPPEVILKRLLHELLKKLDSELKLEVCHWAAYYEHRMRLGQKAIFHIEAFVAKFMSIYKNFLISTFG</sequence>
<organism>
    <name type="scientific">Arabidopsis thaliana</name>
    <name type="common">Mouse-ear cress</name>
    <dbReference type="NCBI Taxonomy" id="3702"/>
    <lineage>
        <taxon>Eukaryota</taxon>
        <taxon>Viridiplantae</taxon>
        <taxon>Streptophyta</taxon>
        <taxon>Embryophyta</taxon>
        <taxon>Tracheophyta</taxon>
        <taxon>Spermatophyta</taxon>
        <taxon>Magnoliopsida</taxon>
        <taxon>eudicotyledons</taxon>
        <taxon>Gunneridae</taxon>
        <taxon>Pentapetalae</taxon>
        <taxon>rosids</taxon>
        <taxon>malvids</taxon>
        <taxon>Brassicales</taxon>
        <taxon>Brassicaceae</taxon>
        <taxon>Camelineae</taxon>
        <taxon>Arabidopsis</taxon>
    </lineage>
</organism>
<reference key="1">
    <citation type="journal article" date="2000" name="Nature">
        <title>Sequence and analysis of chromosome 5 of the plant Arabidopsis thaliana.</title>
        <authorList>
            <person name="Tabata S."/>
            <person name="Kaneko T."/>
            <person name="Nakamura Y."/>
            <person name="Kotani H."/>
            <person name="Kato T."/>
            <person name="Asamizu E."/>
            <person name="Miyajima N."/>
            <person name="Sasamoto S."/>
            <person name="Kimura T."/>
            <person name="Hosouchi T."/>
            <person name="Kawashima K."/>
            <person name="Kohara M."/>
            <person name="Matsumoto M."/>
            <person name="Matsuno A."/>
            <person name="Muraki A."/>
            <person name="Nakayama S."/>
            <person name="Nakazaki N."/>
            <person name="Naruo K."/>
            <person name="Okumura S."/>
            <person name="Shinpo S."/>
            <person name="Takeuchi C."/>
            <person name="Wada T."/>
            <person name="Watanabe A."/>
            <person name="Yamada M."/>
            <person name="Yasuda M."/>
            <person name="Sato S."/>
            <person name="de la Bastide M."/>
            <person name="Huang E."/>
            <person name="Spiegel L."/>
            <person name="Gnoj L."/>
            <person name="O'Shaughnessy A."/>
            <person name="Preston R."/>
            <person name="Habermann K."/>
            <person name="Murray J."/>
            <person name="Johnson D."/>
            <person name="Rohlfing T."/>
            <person name="Nelson J."/>
            <person name="Stoneking T."/>
            <person name="Pepin K."/>
            <person name="Spieth J."/>
            <person name="Sekhon M."/>
            <person name="Armstrong J."/>
            <person name="Becker M."/>
            <person name="Belter E."/>
            <person name="Cordum H."/>
            <person name="Cordes M."/>
            <person name="Courtney L."/>
            <person name="Courtney W."/>
            <person name="Dante M."/>
            <person name="Du H."/>
            <person name="Edwards J."/>
            <person name="Fryman J."/>
            <person name="Haakensen B."/>
            <person name="Lamar E."/>
            <person name="Latreille P."/>
            <person name="Leonard S."/>
            <person name="Meyer R."/>
            <person name="Mulvaney E."/>
            <person name="Ozersky P."/>
            <person name="Riley A."/>
            <person name="Strowmatt C."/>
            <person name="Wagner-McPherson C."/>
            <person name="Wollam A."/>
            <person name="Yoakum M."/>
            <person name="Bell M."/>
            <person name="Dedhia N."/>
            <person name="Parnell L."/>
            <person name="Shah R."/>
            <person name="Rodriguez M."/>
            <person name="Hoon See L."/>
            <person name="Vil D."/>
            <person name="Baker J."/>
            <person name="Kirchoff K."/>
            <person name="Toth K."/>
            <person name="King L."/>
            <person name="Bahret A."/>
            <person name="Miller B."/>
            <person name="Marra M.A."/>
            <person name="Martienssen R."/>
            <person name="McCombie W.R."/>
            <person name="Wilson R.K."/>
            <person name="Murphy G."/>
            <person name="Bancroft I."/>
            <person name="Volckaert G."/>
            <person name="Wambutt R."/>
            <person name="Duesterhoeft A."/>
            <person name="Stiekema W."/>
            <person name="Pohl T."/>
            <person name="Entian K.-D."/>
            <person name="Terryn N."/>
            <person name="Hartley N."/>
            <person name="Bent E."/>
            <person name="Johnson S."/>
            <person name="Langham S.-A."/>
            <person name="McCullagh B."/>
            <person name="Robben J."/>
            <person name="Grymonprez B."/>
            <person name="Zimmermann W."/>
            <person name="Ramsperger U."/>
            <person name="Wedler H."/>
            <person name="Balke K."/>
            <person name="Wedler E."/>
            <person name="Peters S."/>
            <person name="van Staveren M."/>
            <person name="Dirkse W."/>
            <person name="Mooijman P."/>
            <person name="Klein Lankhorst R."/>
            <person name="Weitzenegger T."/>
            <person name="Bothe G."/>
            <person name="Rose M."/>
            <person name="Hauf J."/>
            <person name="Berneiser S."/>
            <person name="Hempel S."/>
            <person name="Feldpausch M."/>
            <person name="Lamberth S."/>
            <person name="Villarroel R."/>
            <person name="Gielen J."/>
            <person name="Ardiles W."/>
            <person name="Bents O."/>
            <person name="Lemcke K."/>
            <person name="Kolesov G."/>
            <person name="Mayer K.F.X."/>
            <person name="Rudd S."/>
            <person name="Schoof H."/>
            <person name="Schueller C."/>
            <person name="Zaccaria P."/>
            <person name="Mewes H.-W."/>
            <person name="Bevan M."/>
            <person name="Fransz P.F."/>
        </authorList>
    </citation>
    <scope>NUCLEOTIDE SEQUENCE [LARGE SCALE GENOMIC DNA]</scope>
    <source>
        <strain>cv. Columbia</strain>
    </source>
</reference>
<reference key="2">
    <citation type="journal article" date="2017" name="Plant J.">
        <title>Araport11: a complete reannotation of the Arabidopsis thaliana reference genome.</title>
        <authorList>
            <person name="Cheng C.Y."/>
            <person name="Krishnakumar V."/>
            <person name="Chan A.P."/>
            <person name="Thibaud-Nissen F."/>
            <person name="Schobel S."/>
            <person name="Town C.D."/>
        </authorList>
    </citation>
    <scope>GENOME REANNOTATION</scope>
    <source>
        <strain>cv. Columbia</strain>
    </source>
</reference>
<reference key="3">
    <citation type="journal article" date="2003" name="Science">
        <title>Empirical analysis of transcriptional activity in the Arabidopsis genome.</title>
        <authorList>
            <person name="Yamada K."/>
            <person name="Lim J."/>
            <person name="Dale J.M."/>
            <person name="Chen H."/>
            <person name="Shinn P."/>
            <person name="Palm C.J."/>
            <person name="Southwick A.M."/>
            <person name="Wu H.C."/>
            <person name="Kim C.J."/>
            <person name="Nguyen M."/>
            <person name="Pham P.K."/>
            <person name="Cheuk R.F."/>
            <person name="Karlin-Newmann G."/>
            <person name="Liu S.X."/>
            <person name="Lam B."/>
            <person name="Sakano H."/>
            <person name="Wu T."/>
            <person name="Yu G."/>
            <person name="Miranda M."/>
            <person name="Quach H.L."/>
            <person name="Tripp M."/>
            <person name="Chang C.H."/>
            <person name="Lee J.M."/>
            <person name="Toriumi M.J."/>
            <person name="Chan M.M."/>
            <person name="Tang C.C."/>
            <person name="Onodera C.S."/>
            <person name="Deng J.M."/>
            <person name="Akiyama K."/>
            <person name="Ansari Y."/>
            <person name="Arakawa T."/>
            <person name="Banh J."/>
            <person name="Banno F."/>
            <person name="Bowser L."/>
            <person name="Brooks S.Y."/>
            <person name="Carninci P."/>
            <person name="Chao Q."/>
            <person name="Choy N."/>
            <person name="Enju A."/>
            <person name="Goldsmith A.D."/>
            <person name="Gurjal M."/>
            <person name="Hansen N.F."/>
            <person name="Hayashizaki Y."/>
            <person name="Johnson-Hopson C."/>
            <person name="Hsuan V.W."/>
            <person name="Iida K."/>
            <person name="Karnes M."/>
            <person name="Khan S."/>
            <person name="Koesema E."/>
            <person name="Ishida J."/>
            <person name="Jiang P.X."/>
            <person name="Jones T."/>
            <person name="Kawai J."/>
            <person name="Kamiya A."/>
            <person name="Meyers C."/>
            <person name="Nakajima M."/>
            <person name="Narusaka M."/>
            <person name="Seki M."/>
            <person name="Sakurai T."/>
            <person name="Satou M."/>
            <person name="Tamse R."/>
            <person name="Vaysberg M."/>
            <person name="Wallender E.K."/>
            <person name="Wong C."/>
            <person name="Yamamura Y."/>
            <person name="Yuan S."/>
            <person name="Shinozaki K."/>
            <person name="Davis R.W."/>
            <person name="Theologis A."/>
            <person name="Ecker J.R."/>
        </authorList>
    </citation>
    <scope>NUCLEOTIDE SEQUENCE [LARGE SCALE MRNA]</scope>
    <source>
        <strain>cv. Columbia</strain>
    </source>
</reference>
<accession>Q8VXX4</accession>
<comment type="function">
    <text evidence="1">May be involved in DNA replication and thus regulate cell proliferation.</text>
</comment>
<comment type="subunit">
    <text evidence="1">Heterotetramer of subunits RFC2, RFC3, RFC4 and RFC5 that can form a complex with RFC1.</text>
</comment>
<comment type="subcellular location">
    <subcellularLocation>
        <location evidence="1">Nucleus</location>
    </subcellularLocation>
</comment>
<comment type="similarity">
    <text evidence="3">Belongs to the activator 1 small subunits family.</text>
</comment>
<name>RFC3_ARATH</name>
<keyword id="KW-0067">ATP-binding</keyword>
<keyword id="KW-0235">DNA replication</keyword>
<keyword id="KW-0238">DNA-binding</keyword>
<keyword id="KW-0547">Nucleotide-binding</keyword>
<keyword id="KW-0539">Nucleus</keyword>
<keyword id="KW-1185">Reference proteome</keyword>
<protein>
    <recommendedName>
        <fullName>Replication factor C subunit 3</fullName>
        <shortName>AtRFC3</shortName>
    </recommendedName>
    <alternativeName>
        <fullName>Activator 1 subunit 3</fullName>
    </alternativeName>
    <alternativeName>
        <fullName>Protein EMBRYO DEFECTIVE 161</fullName>
    </alternativeName>
    <alternativeName>
        <fullName>Protein EMBRYO DEFECTIVE 251</fullName>
    </alternativeName>
    <alternativeName>
        <fullName>Protein EMBRYO DEFECTIVE 2775</fullName>
    </alternativeName>
</protein>
<gene>
    <name type="primary">RFC3</name>
    <name type="synonym">EMB161</name>
    <name type="synonym">EMB251</name>
    <name type="synonym">EMB2775</name>
    <name type="synonym">RFC5</name>
    <name type="ordered locus">At5g27740</name>
    <name type="ORF">T1G16</name>
</gene>
<evidence type="ECO:0000250" key="1"/>
<evidence type="ECO:0000255" key="2"/>
<evidence type="ECO:0000305" key="3"/>
<feature type="chain" id="PRO_0000422631" description="Replication factor C subunit 3">
    <location>
        <begin position="1"/>
        <end position="354"/>
    </location>
</feature>
<feature type="binding site" evidence="2">
    <location>
        <begin position="41"/>
        <end position="48"/>
    </location>
    <ligand>
        <name>ATP</name>
        <dbReference type="ChEBI" id="CHEBI:30616"/>
    </ligand>
</feature>
<dbReference type="EMBL" id="AC069556">
    <property type="status" value="NOT_ANNOTATED_CDS"/>
    <property type="molecule type" value="Genomic_DNA"/>
</dbReference>
<dbReference type="EMBL" id="CP002688">
    <property type="protein sequence ID" value="AED93720.1"/>
    <property type="molecule type" value="Genomic_DNA"/>
</dbReference>
<dbReference type="EMBL" id="AY074381">
    <property type="protein sequence ID" value="AAL67077.1"/>
    <property type="molecule type" value="mRNA"/>
</dbReference>
<dbReference type="EMBL" id="AY091236">
    <property type="protein sequence ID" value="AAM14175.1"/>
    <property type="molecule type" value="mRNA"/>
</dbReference>
<dbReference type="RefSeq" id="NP_198126.1">
    <property type="nucleotide sequence ID" value="NM_122656.5"/>
</dbReference>
<dbReference type="SMR" id="Q8VXX4"/>
<dbReference type="BioGRID" id="18110">
    <property type="interactions" value="7"/>
</dbReference>
<dbReference type="FunCoup" id="Q8VXX4">
    <property type="interactions" value="3654"/>
</dbReference>
<dbReference type="STRING" id="3702.Q8VXX4"/>
<dbReference type="PaxDb" id="3702-AT5G27740.1"/>
<dbReference type="ProteomicsDB" id="236230"/>
<dbReference type="EnsemblPlants" id="AT5G27740.1">
    <property type="protein sequence ID" value="AT5G27740.1"/>
    <property type="gene ID" value="AT5G27740"/>
</dbReference>
<dbReference type="GeneID" id="832836"/>
<dbReference type="Gramene" id="AT5G27740.1">
    <property type="protein sequence ID" value="AT5G27740.1"/>
    <property type="gene ID" value="AT5G27740"/>
</dbReference>
<dbReference type="KEGG" id="ath:AT5G27740"/>
<dbReference type="Araport" id="AT5G27740"/>
<dbReference type="TAIR" id="AT5G27740">
    <property type="gene designation" value="EMB2775"/>
</dbReference>
<dbReference type="eggNOG" id="KOG2035">
    <property type="taxonomic scope" value="Eukaryota"/>
</dbReference>
<dbReference type="HOGENOM" id="CLU_042324_5_0_1"/>
<dbReference type="InParanoid" id="Q8VXX4"/>
<dbReference type="OMA" id="LKADIMH"/>
<dbReference type="PhylomeDB" id="Q8VXX4"/>
<dbReference type="CD-CODE" id="4299E36E">
    <property type="entry name" value="Nucleolus"/>
</dbReference>
<dbReference type="PRO" id="PR:Q8VXX4"/>
<dbReference type="Proteomes" id="UP000006548">
    <property type="component" value="Chromosome 5"/>
</dbReference>
<dbReference type="ExpressionAtlas" id="Q8VXX4">
    <property type="expression patterns" value="baseline and differential"/>
</dbReference>
<dbReference type="GO" id="GO:0005634">
    <property type="term" value="C:nucleus"/>
    <property type="evidence" value="ECO:0007669"/>
    <property type="project" value="UniProtKB-SubCell"/>
</dbReference>
<dbReference type="GO" id="GO:0005524">
    <property type="term" value="F:ATP binding"/>
    <property type="evidence" value="ECO:0007669"/>
    <property type="project" value="UniProtKB-KW"/>
</dbReference>
<dbReference type="GO" id="GO:0016887">
    <property type="term" value="F:ATP hydrolysis activity"/>
    <property type="evidence" value="ECO:0007669"/>
    <property type="project" value="InterPro"/>
</dbReference>
<dbReference type="GO" id="GO:0003677">
    <property type="term" value="F:DNA binding"/>
    <property type="evidence" value="ECO:0007669"/>
    <property type="project" value="UniProtKB-KW"/>
</dbReference>
<dbReference type="GO" id="GO:0006260">
    <property type="term" value="P:DNA replication"/>
    <property type="evidence" value="ECO:0007669"/>
    <property type="project" value="UniProtKB-KW"/>
</dbReference>
<dbReference type="CDD" id="cd00009">
    <property type="entry name" value="AAA"/>
    <property type="match status" value="1"/>
</dbReference>
<dbReference type="CDD" id="cd18140">
    <property type="entry name" value="HLD_clamp_RFC"/>
    <property type="match status" value="1"/>
</dbReference>
<dbReference type="FunFam" id="1.20.272.10:FF:000002">
    <property type="entry name" value="Replication factor C subunit 3"/>
    <property type="match status" value="1"/>
</dbReference>
<dbReference type="FunFam" id="1.10.8.60:FF:000030">
    <property type="entry name" value="replication factor C subunit 3"/>
    <property type="match status" value="1"/>
</dbReference>
<dbReference type="FunFam" id="3.40.50.300:FF:000136">
    <property type="entry name" value="Replication factor C subunit 5"/>
    <property type="match status" value="1"/>
</dbReference>
<dbReference type="Gene3D" id="1.10.8.60">
    <property type="match status" value="1"/>
</dbReference>
<dbReference type="Gene3D" id="1.20.272.10">
    <property type="match status" value="1"/>
</dbReference>
<dbReference type="Gene3D" id="3.40.50.300">
    <property type="entry name" value="P-loop containing nucleotide triphosphate hydrolases"/>
    <property type="match status" value="1"/>
</dbReference>
<dbReference type="InterPro" id="IPR003593">
    <property type="entry name" value="AAA+_ATPase"/>
</dbReference>
<dbReference type="InterPro" id="IPR008921">
    <property type="entry name" value="DNA_pol3_clamp-load_cplx_C"/>
</dbReference>
<dbReference type="InterPro" id="IPR050238">
    <property type="entry name" value="DNA_Rep/Repair_Clamp_Loader"/>
</dbReference>
<dbReference type="InterPro" id="IPR027417">
    <property type="entry name" value="P-loop_NTPase"/>
</dbReference>
<dbReference type="InterPro" id="IPR047854">
    <property type="entry name" value="RFC_lid"/>
</dbReference>
<dbReference type="PANTHER" id="PTHR11669">
    <property type="entry name" value="REPLICATION FACTOR C / DNA POLYMERASE III GAMMA-TAU SUBUNIT"/>
    <property type="match status" value="1"/>
</dbReference>
<dbReference type="PANTHER" id="PTHR11669:SF1">
    <property type="entry name" value="REPLICATION FACTOR C SUBUNIT 3"/>
    <property type="match status" value="1"/>
</dbReference>
<dbReference type="Pfam" id="PF13177">
    <property type="entry name" value="DNA_pol3_delta2"/>
    <property type="match status" value="1"/>
</dbReference>
<dbReference type="Pfam" id="PF21960">
    <property type="entry name" value="RCF1-5-like_lid"/>
    <property type="match status" value="1"/>
</dbReference>
<dbReference type="Pfam" id="PF22534">
    <property type="entry name" value="RFC_C"/>
    <property type="match status" value="1"/>
</dbReference>
<dbReference type="SMART" id="SM00382">
    <property type="entry name" value="AAA"/>
    <property type="match status" value="1"/>
</dbReference>
<dbReference type="SUPFAM" id="SSF52540">
    <property type="entry name" value="P-loop containing nucleoside triphosphate hydrolases"/>
    <property type="match status" value="1"/>
</dbReference>
<dbReference type="SUPFAM" id="SSF48019">
    <property type="entry name" value="post-AAA+ oligomerization domain-like"/>
    <property type="match status" value="1"/>
</dbReference>
<proteinExistence type="evidence at transcript level"/>